<comment type="function">
    <text evidence="1">Binds with low affinity to muscular (alpha-1-beta-1-delta-epsilon/CHRNA1-CHRNB1-CHRND-CHRNE) and very low affinity to neuronal (alpha-7/CHRNA7) nicotinic acetylcholine receptor (nAChR).</text>
</comment>
<comment type="subcellular location">
    <subcellularLocation>
        <location evidence="3">Secreted</location>
    </subcellularLocation>
</comment>
<comment type="tissue specificity">
    <text evidence="4">Expressed by the venom gland.</text>
</comment>
<comment type="similarity">
    <text evidence="4">Belongs to the three-finger toxin family. Ancestral subfamily. Orphan group II sub-subfamily.</text>
</comment>
<sequence>MKTLLLTLVVVTIVCLDLGYTLTCLNCPEMFCGKFQICRNGEKICFKKLHQRRPFSLRYIRGCAATCPETKPRDMVECCSTDRCNR</sequence>
<feature type="signal peptide" evidence="3">
    <location>
        <begin position="1"/>
        <end position="21"/>
    </location>
</feature>
<feature type="chain" id="PRO_0000035469" description="Probable weak neurotoxin NNAM2" evidence="3">
    <location>
        <begin position="22"/>
        <end position="86"/>
    </location>
</feature>
<feature type="disulfide bond" evidence="2">
    <location>
        <begin position="24"/>
        <end position="45"/>
    </location>
</feature>
<feature type="disulfide bond" evidence="2">
    <location>
        <begin position="27"/>
        <end position="32"/>
    </location>
</feature>
<feature type="disulfide bond" evidence="2">
    <location>
        <begin position="38"/>
        <end position="63"/>
    </location>
</feature>
<feature type="disulfide bond" evidence="2">
    <location>
        <begin position="67"/>
        <end position="78"/>
    </location>
</feature>
<feature type="disulfide bond" evidence="2">
    <location>
        <begin position="79"/>
        <end position="84"/>
    </location>
</feature>
<feature type="sequence conflict" description="In Ref. 1; CAA04578." evidence="4" ref="1">
    <original>T</original>
    <variation>S</variation>
    <location>
        <position position="7"/>
    </location>
</feature>
<protein>
    <recommendedName>
        <fullName>Probable weak neurotoxin NNAM2</fullName>
    </recommendedName>
    <alternativeName>
        <fullName>TA-N9</fullName>
    </alternativeName>
</protein>
<evidence type="ECO:0000250" key="1">
    <source>
        <dbReference type="UniProtKB" id="O42255"/>
    </source>
</evidence>
<evidence type="ECO:0000250" key="2">
    <source>
        <dbReference type="UniProtKB" id="Q8AY51"/>
    </source>
</evidence>
<evidence type="ECO:0000269" key="3">
    <source ref="3"/>
</evidence>
<evidence type="ECO:0000305" key="4"/>
<accession>Q9YGI4</accession>
<accession>P82012</accession>
<accession>Q9YGI7</accession>
<accession>Q9YGJ3</accession>
<dbReference type="EMBL" id="AJ001185">
    <property type="protein sequence ID" value="CAA04578.1"/>
    <property type="molecule type" value="mRNA"/>
</dbReference>
<dbReference type="EMBL" id="AJ131926">
    <property type="protein sequence ID" value="CAA10530.1"/>
    <property type="molecule type" value="mRNA"/>
</dbReference>
<dbReference type="SMR" id="Q9YGI4"/>
<dbReference type="GO" id="GO:0005576">
    <property type="term" value="C:extracellular region"/>
    <property type="evidence" value="ECO:0007669"/>
    <property type="project" value="UniProtKB-SubCell"/>
</dbReference>
<dbReference type="GO" id="GO:0030550">
    <property type="term" value="F:acetylcholine receptor inhibitor activity"/>
    <property type="evidence" value="ECO:0007669"/>
    <property type="project" value="UniProtKB-KW"/>
</dbReference>
<dbReference type="GO" id="GO:0099106">
    <property type="term" value="F:ion channel regulator activity"/>
    <property type="evidence" value="ECO:0007669"/>
    <property type="project" value="UniProtKB-KW"/>
</dbReference>
<dbReference type="GO" id="GO:0090729">
    <property type="term" value="F:toxin activity"/>
    <property type="evidence" value="ECO:0007669"/>
    <property type="project" value="UniProtKB-KW"/>
</dbReference>
<dbReference type="CDD" id="cd00206">
    <property type="entry name" value="TFP_snake_toxin"/>
    <property type="match status" value="1"/>
</dbReference>
<dbReference type="FunFam" id="2.10.60.10:FF:000024">
    <property type="entry name" value="Cytotoxin 1"/>
    <property type="match status" value="1"/>
</dbReference>
<dbReference type="Gene3D" id="2.10.60.10">
    <property type="entry name" value="CD59"/>
    <property type="match status" value="1"/>
</dbReference>
<dbReference type="InterPro" id="IPR003571">
    <property type="entry name" value="Snake_3FTx"/>
</dbReference>
<dbReference type="InterPro" id="IPR045860">
    <property type="entry name" value="Snake_toxin-like_sf"/>
</dbReference>
<dbReference type="InterPro" id="IPR018354">
    <property type="entry name" value="Snake_toxin_con_site"/>
</dbReference>
<dbReference type="InterPro" id="IPR054131">
    <property type="entry name" value="Toxin_cobra-type"/>
</dbReference>
<dbReference type="Pfam" id="PF21947">
    <property type="entry name" value="Toxin_cobra-type"/>
    <property type="match status" value="1"/>
</dbReference>
<dbReference type="SUPFAM" id="SSF57302">
    <property type="entry name" value="Snake toxin-like"/>
    <property type="match status" value="1"/>
</dbReference>
<dbReference type="PROSITE" id="PS00272">
    <property type="entry name" value="SNAKE_TOXIN"/>
    <property type="match status" value="1"/>
</dbReference>
<proteinExistence type="evidence at protein level"/>
<organism>
    <name type="scientific">Naja atra</name>
    <name type="common">Chinese cobra</name>
    <dbReference type="NCBI Taxonomy" id="8656"/>
    <lineage>
        <taxon>Eukaryota</taxon>
        <taxon>Metazoa</taxon>
        <taxon>Chordata</taxon>
        <taxon>Craniata</taxon>
        <taxon>Vertebrata</taxon>
        <taxon>Euteleostomi</taxon>
        <taxon>Lepidosauria</taxon>
        <taxon>Squamata</taxon>
        <taxon>Bifurcata</taxon>
        <taxon>Unidentata</taxon>
        <taxon>Episquamata</taxon>
        <taxon>Toxicofera</taxon>
        <taxon>Serpentes</taxon>
        <taxon>Colubroidea</taxon>
        <taxon>Elapidae</taxon>
        <taxon>Elapinae</taxon>
        <taxon>Naja</taxon>
    </lineage>
</organism>
<keyword id="KW-0008">Acetylcholine receptor inhibiting toxin</keyword>
<keyword id="KW-0903">Direct protein sequencing</keyword>
<keyword id="KW-1015">Disulfide bond</keyword>
<keyword id="KW-0872">Ion channel impairing toxin</keyword>
<keyword id="KW-0528">Neurotoxin</keyword>
<keyword id="KW-0629">Postsynaptic neurotoxin</keyword>
<keyword id="KW-0964">Secreted</keyword>
<keyword id="KW-0732">Signal</keyword>
<keyword id="KW-0800">Toxin</keyword>
<reference key="1">
    <citation type="journal article" date="1998" name="Biochim. Biophys. Acta">
        <title>cDNA sequence analysis and expression of four long neurotoxin homologues from Naja naja atra.</title>
        <authorList>
            <person name="Qian Y.-C."/>
            <person name="Fan C.-Y."/>
            <person name="Gong Y."/>
            <person name="Yang S.-L."/>
        </authorList>
    </citation>
    <scope>NUCLEOTIDE SEQUENCE [MRNA]</scope>
    <source>
        <tissue>Venom gland</tissue>
    </source>
</reference>
<reference key="2">
    <citation type="submission" date="1999-01" db="EMBL/GenBank/DDBJ databases">
        <title>A novel neurotoxin from Naja naja atra.</title>
        <authorList>
            <person name="Chang L.-S."/>
        </authorList>
    </citation>
    <scope>NUCLEOTIDE SEQUENCE [MRNA]</scope>
    <source>
        <tissue>Venom gland</tissue>
    </source>
</reference>
<reference key="3">
    <citation type="submission" date="1999-08" db="UniProtKB">
        <title>A novel neurotoxin from Naja naja atra (Taiwan cobra) venom.</title>
        <authorList>
            <person name="Chang L.-S."/>
        </authorList>
    </citation>
    <scope>PROTEIN SEQUENCE OF 22-86</scope>
    <scope>SUBCELLULAR LOCATION</scope>
    <source>
        <tissue>Venom</tissue>
    </source>
</reference>
<name>3NO22_NAJAT</name>